<sequence length="471" mass="50101">MLLPRHHDPIVAIATAPGRGAVGIVRVSGRGLGALIEAVCGRALQPRHAHYGPFLDAQGEAIDQGLALHFPAPHSYTGEEVLELQAHGGPVLLQLLLARCLEAAAQPDARSGLPRLRGLRVAEPGEFTERAFLNDKLDLAQAEAVADLIDASTEAAARSAGRALAGAFSQQVDTLRDRLIELRMLVEATLDFPEEEIDFLEKADARGRLARIAEALDAVLARAKQGALLREGLRVVLAGQPNVGKSSLLNALAGAELAIVTPIAGTTRDKVAETIQIEGVPLHVVDTAGLRAEDDARDEVERIGMQRSWGAIGEADAVIFLHDLTRAGDPGYDAAERDIEQRLPAGVHVLDVHNKADAAAAGAAALAPQALRLSARTGEGLDTLRRRLLQLAGWQAGSEGVFIARTRHLQALQATAEHLVRARQLADRADAALDLLAEELRLAHDALGAITGRYTPDELLGDIFSRFCIGK</sequence>
<accession>A2SMI8</accession>
<protein>
    <recommendedName>
        <fullName evidence="1">tRNA modification GTPase MnmE</fullName>
        <ecNumber evidence="1">3.6.-.-</ecNumber>
    </recommendedName>
</protein>
<gene>
    <name evidence="1" type="primary">mnmE</name>
    <name evidence="1" type="synonym">trmE</name>
    <name type="ordered locus">Mpe_A3824</name>
</gene>
<evidence type="ECO:0000255" key="1">
    <source>
        <dbReference type="HAMAP-Rule" id="MF_00379"/>
    </source>
</evidence>
<evidence type="ECO:0000305" key="2"/>
<feature type="chain" id="PRO_0000345830" description="tRNA modification GTPase MnmE">
    <location>
        <begin position="1"/>
        <end position="471"/>
    </location>
</feature>
<feature type="domain" description="TrmE-type G">
    <location>
        <begin position="232"/>
        <end position="393"/>
    </location>
</feature>
<feature type="binding site" evidence="1">
    <location>
        <position position="26"/>
    </location>
    <ligand>
        <name>(6S)-5-formyl-5,6,7,8-tetrahydrofolate</name>
        <dbReference type="ChEBI" id="CHEBI:57457"/>
    </ligand>
</feature>
<feature type="binding site" evidence="1">
    <location>
        <position position="83"/>
    </location>
    <ligand>
        <name>(6S)-5-formyl-5,6,7,8-tetrahydrofolate</name>
        <dbReference type="ChEBI" id="CHEBI:57457"/>
    </ligand>
</feature>
<feature type="binding site" evidence="1">
    <location>
        <position position="136"/>
    </location>
    <ligand>
        <name>(6S)-5-formyl-5,6,7,8-tetrahydrofolate</name>
        <dbReference type="ChEBI" id="CHEBI:57457"/>
    </ligand>
</feature>
<feature type="binding site" evidence="1">
    <location>
        <begin position="242"/>
        <end position="247"/>
    </location>
    <ligand>
        <name>GTP</name>
        <dbReference type="ChEBI" id="CHEBI:37565"/>
    </ligand>
</feature>
<feature type="binding site" evidence="1">
    <location>
        <position position="242"/>
    </location>
    <ligand>
        <name>K(+)</name>
        <dbReference type="ChEBI" id="CHEBI:29103"/>
    </ligand>
</feature>
<feature type="binding site" evidence="1">
    <location>
        <position position="246"/>
    </location>
    <ligand>
        <name>Mg(2+)</name>
        <dbReference type="ChEBI" id="CHEBI:18420"/>
    </ligand>
</feature>
<feature type="binding site" evidence="1">
    <location>
        <begin position="261"/>
        <end position="267"/>
    </location>
    <ligand>
        <name>GTP</name>
        <dbReference type="ChEBI" id="CHEBI:37565"/>
    </ligand>
</feature>
<feature type="binding site" evidence="1">
    <location>
        <position position="261"/>
    </location>
    <ligand>
        <name>K(+)</name>
        <dbReference type="ChEBI" id="CHEBI:29103"/>
    </ligand>
</feature>
<feature type="binding site" evidence="1">
    <location>
        <position position="263"/>
    </location>
    <ligand>
        <name>K(+)</name>
        <dbReference type="ChEBI" id="CHEBI:29103"/>
    </ligand>
</feature>
<feature type="binding site" evidence="1">
    <location>
        <position position="266"/>
    </location>
    <ligand>
        <name>K(+)</name>
        <dbReference type="ChEBI" id="CHEBI:29103"/>
    </ligand>
</feature>
<feature type="binding site" evidence="1">
    <location>
        <position position="267"/>
    </location>
    <ligand>
        <name>Mg(2+)</name>
        <dbReference type="ChEBI" id="CHEBI:18420"/>
    </ligand>
</feature>
<feature type="binding site" evidence="1">
    <location>
        <begin position="286"/>
        <end position="289"/>
    </location>
    <ligand>
        <name>GTP</name>
        <dbReference type="ChEBI" id="CHEBI:37565"/>
    </ligand>
</feature>
<feature type="binding site" evidence="1">
    <location>
        <begin position="354"/>
        <end position="357"/>
    </location>
    <ligand>
        <name>GTP</name>
        <dbReference type="ChEBI" id="CHEBI:37565"/>
    </ligand>
</feature>
<feature type="binding site" evidence="1">
    <location>
        <begin position="374"/>
        <end position="376"/>
    </location>
    <ligand>
        <name>GTP</name>
        <dbReference type="ChEBI" id="CHEBI:37565"/>
    </ligand>
</feature>
<feature type="binding site" evidence="1">
    <location>
        <position position="471"/>
    </location>
    <ligand>
        <name>(6S)-5-formyl-5,6,7,8-tetrahydrofolate</name>
        <dbReference type="ChEBI" id="CHEBI:57457"/>
    </ligand>
</feature>
<keyword id="KW-0963">Cytoplasm</keyword>
<keyword id="KW-0342">GTP-binding</keyword>
<keyword id="KW-0378">Hydrolase</keyword>
<keyword id="KW-0460">Magnesium</keyword>
<keyword id="KW-0479">Metal-binding</keyword>
<keyword id="KW-0547">Nucleotide-binding</keyword>
<keyword id="KW-0630">Potassium</keyword>
<keyword id="KW-1185">Reference proteome</keyword>
<keyword id="KW-0819">tRNA processing</keyword>
<reference key="1">
    <citation type="journal article" date="2007" name="J. Bacteriol.">
        <title>Whole-genome analysis of the methyl tert-butyl ether-degrading beta-proteobacterium Methylibium petroleiphilum PM1.</title>
        <authorList>
            <person name="Kane S.R."/>
            <person name="Chakicherla A.Y."/>
            <person name="Chain P.S.G."/>
            <person name="Schmidt R."/>
            <person name="Shin M.W."/>
            <person name="Legler T.C."/>
            <person name="Scow K.M."/>
            <person name="Larimer F.W."/>
            <person name="Lucas S.M."/>
            <person name="Richardson P.M."/>
            <person name="Hristova K.R."/>
        </authorList>
    </citation>
    <scope>NUCLEOTIDE SEQUENCE [LARGE SCALE GENOMIC DNA]</scope>
    <source>
        <strain>ATCC BAA-1232 / LMG 22953 / PM1</strain>
    </source>
</reference>
<dbReference type="EC" id="3.6.-.-" evidence="1"/>
<dbReference type="EMBL" id="CP000555">
    <property type="protein sequence ID" value="ABM96777.1"/>
    <property type="status" value="ALT_INIT"/>
    <property type="molecule type" value="Genomic_DNA"/>
</dbReference>
<dbReference type="RefSeq" id="WP_193373375.1">
    <property type="nucleotide sequence ID" value="NC_008825.1"/>
</dbReference>
<dbReference type="SMR" id="A2SMI8"/>
<dbReference type="STRING" id="420662.Mpe_A3824"/>
<dbReference type="KEGG" id="mpt:Mpe_A3824"/>
<dbReference type="eggNOG" id="COG0486">
    <property type="taxonomic scope" value="Bacteria"/>
</dbReference>
<dbReference type="HOGENOM" id="CLU_019624_4_1_4"/>
<dbReference type="Proteomes" id="UP000000366">
    <property type="component" value="Chromosome"/>
</dbReference>
<dbReference type="GO" id="GO:0005829">
    <property type="term" value="C:cytosol"/>
    <property type="evidence" value="ECO:0007669"/>
    <property type="project" value="TreeGrafter"/>
</dbReference>
<dbReference type="GO" id="GO:0005525">
    <property type="term" value="F:GTP binding"/>
    <property type="evidence" value="ECO:0007669"/>
    <property type="project" value="UniProtKB-UniRule"/>
</dbReference>
<dbReference type="GO" id="GO:0003924">
    <property type="term" value="F:GTPase activity"/>
    <property type="evidence" value="ECO:0007669"/>
    <property type="project" value="UniProtKB-UniRule"/>
</dbReference>
<dbReference type="GO" id="GO:0046872">
    <property type="term" value="F:metal ion binding"/>
    <property type="evidence" value="ECO:0007669"/>
    <property type="project" value="UniProtKB-KW"/>
</dbReference>
<dbReference type="GO" id="GO:0030488">
    <property type="term" value="P:tRNA methylation"/>
    <property type="evidence" value="ECO:0007669"/>
    <property type="project" value="TreeGrafter"/>
</dbReference>
<dbReference type="GO" id="GO:0002098">
    <property type="term" value="P:tRNA wobble uridine modification"/>
    <property type="evidence" value="ECO:0007669"/>
    <property type="project" value="TreeGrafter"/>
</dbReference>
<dbReference type="CDD" id="cd04164">
    <property type="entry name" value="trmE"/>
    <property type="match status" value="1"/>
</dbReference>
<dbReference type="CDD" id="cd14858">
    <property type="entry name" value="TrmE_N"/>
    <property type="match status" value="1"/>
</dbReference>
<dbReference type="Gene3D" id="3.40.50.300">
    <property type="entry name" value="P-loop containing nucleotide triphosphate hydrolases"/>
    <property type="match status" value="1"/>
</dbReference>
<dbReference type="Gene3D" id="3.30.1360.120">
    <property type="entry name" value="Probable tRNA modification gtpase trme, domain 1"/>
    <property type="match status" value="1"/>
</dbReference>
<dbReference type="Gene3D" id="1.20.120.430">
    <property type="entry name" value="tRNA modification GTPase MnmE domain 2"/>
    <property type="match status" value="1"/>
</dbReference>
<dbReference type="HAMAP" id="MF_00379">
    <property type="entry name" value="GTPase_MnmE"/>
    <property type="match status" value="1"/>
</dbReference>
<dbReference type="InterPro" id="IPR031168">
    <property type="entry name" value="G_TrmE"/>
</dbReference>
<dbReference type="InterPro" id="IPR006073">
    <property type="entry name" value="GTP-bd"/>
</dbReference>
<dbReference type="InterPro" id="IPR018948">
    <property type="entry name" value="GTP-bd_TrmE_N"/>
</dbReference>
<dbReference type="InterPro" id="IPR004520">
    <property type="entry name" value="GTPase_MnmE"/>
</dbReference>
<dbReference type="InterPro" id="IPR027368">
    <property type="entry name" value="MnmE_dom2"/>
</dbReference>
<dbReference type="InterPro" id="IPR025867">
    <property type="entry name" value="MnmE_helical"/>
</dbReference>
<dbReference type="InterPro" id="IPR027417">
    <property type="entry name" value="P-loop_NTPase"/>
</dbReference>
<dbReference type="InterPro" id="IPR005225">
    <property type="entry name" value="Small_GTP-bd"/>
</dbReference>
<dbReference type="InterPro" id="IPR027266">
    <property type="entry name" value="TrmE/GcvT_dom1"/>
</dbReference>
<dbReference type="NCBIfam" id="TIGR00450">
    <property type="entry name" value="mnmE_trmE_thdF"/>
    <property type="match status" value="1"/>
</dbReference>
<dbReference type="NCBIfam" id="NF003661">
    <property type="entry name" value="PRK05291.1-3"/>
    <property type="match status" value="1"/>
</dbReference>
<dbReference type="NCBIfam" id="TIGR00231">
    <property type="entry name" value="small_GTP"/>
    <property type="match status" value="1"/>
</dbReference>
<dbReference type="PANTHER" id="PTHR42714">
    <property type="entry name" value="TRNA MODIFICATION GTPASE GTPBP3"/>
    <property type="match status" value="1"/>
</dbReference>
<dbReference type="PANTHER" id="PTHR42714:SF2">
    <property type="entry name" value="TRNA MODIFICATION GTPASE GTPBP3, MITOCHONDRIAL"/>
    <property type="match status" value="1"/>
</dbReference>
<dbReference type="Pfam" id="PF01926">
    <property type="entry name" value="MMR_HSR1"/>
    <property type="match status" value="1"/>
</dbReference>
<dbReference type="Pfam" id="PF12631">
    <property type="entry name" value="MnmE_helical"/>
    <property type="match status" value="1"/>
</dbReference>
<dbReference type="Pfam" id="PF10396">
    <property type="entry name" value="TrmE_N"/>
    <property type="match status" value="1"/>
</dbReference>
<dbReference type="SUPFAM" id="SSF52540">
    <property type="entry name" value="P-loop containing nucleoside triphosphate hydrolases"/>
    <property type="match status" value="1"/>
</dbReference>
<dbReference type="SUPFAM" id="SSF116878">
    <property type="entry name" value="TrmE connector domain"/>
    <property type="match status" value="1"/>
</dbReference>
<dbReference type="PROSITE" id="PS51709">
    <property type="entry name" value="G_TRME"/>
    <property type="match status" value="1"/>
</dbReference>
<organism>
    <name type="scientific">Methylibium petroleiphilum (strain ATCC BAA-1232 / LMG 22953 / PM1)</name>
    <dbReference type="NCBI Taxonomy" id="420662"/>
    <lineage>
        <taxon>Bacteria</taxon>
        <taxon>Pseudomonadati</taxon>
        <taxon>Pseudomonadota</taxon>
        <taxon>Betaproteobacteria</taxon>
        <taxon>Burkholderiales</taxon>
        <taxon>Sphaerotilaceae</taxon>
        <taxon>Methylibium</taxon>
    </lineage>
</organism>
<name>MNME_METPP</name>
<proteinExistence type="inferred from homology"/>
<comment type="function">
    <text evidence="1">Exhibits a very high intrinsic GTPase hydrolysis rate. Involved in the addition of a carboxymethylaminomethyl (cmnm) group at the wobble position (U34) of certain tRNAs, forming tRNA-cmnm(5)s(2)U34.</text>
</comment>
<comment type="cofactor">
    <cofactor evidence="1">
        <name>K(+)</name>
        <dbReference type="ChEBI" id="CHEBI:29103"/>
    </cofactor>
    <text evidence="1">Binds 1 potassium ion per subunit.</text>
</comment>
<comment type="subunit">
    <text evidence="1">Homodimer. Heterotetramer of two MnmE and two MnmG subunits.</text>
</comment>
<comment type="subcellular location">
    <subcellularLocation>
        <location evidence="1">Cytoplasm</location>
    </subcellularLocation>
</comment>
<comment type="similarity">
    <text evidence="1">Belongs to the TRAFAC class TrmE-Era-EngA-EngB-Septin-like GTPase superfamily. TrmE GTPase family.</text>
</comment>
<comment type="sequence caution" evidence="2">
    <conflict type="erroneous initiation">
        <sequence resource="EMBL-CDS" id="ABM96777"/>
    </conflict>
</comment>